<evidence type="ECO:0000255" key="1">
    <source>
        <dbReference type="HAMAP-Rule" id="MF_01716"/>
    </source>
</evidence>
<feature type="chain" id="PRO_0000261118" description="Ribose import ATP-binding protein RbsA">
    <location>
        <begin position="1"/>
        <end position="501"/>
    </location>
</feature>
<feature type="domain" description="ABC transporter 1" evidence="1">
    <location>
        <begin position="6"/>
        <end position="242"/>
    </location>
</feature>
<feature type="domain" description="ABC transporter 2" evidence="1">
    <location>
        <begin position="253"/>
        <end position="495"/>
    </location>
</feature>
<feature type="binding site" evidence="1">
    <location>
        <begin position="38"/>
        <end position="45"/>
    </location>
    <ligand>
        <name>ATP</name>
        <dbReference type="ChEBI" id="CHEBI:30616"/>
    </ligand>
</feature>
<organism>
    <name type="scientific">Vibrio vulnificus (strain CMCP6)</name>
    <dbReference type="NCBI Taxonomy" id="216895"/>
    <lineage>
        <taxon>Bacteria</taxon>
        <taxon>Pseudomonadati</taxon>
        <taxon>Pseudomonadota</taxon>
        <taxon>Gammaproteobacteria</taxon>
        <taxon>Vibrionales</taxon>
        <taxon>Vibrionaceae</taxon>
        <taxon>Vibrio</taxon>
    </lineage>
</organism>
<sequence>MNQAILQLSEIEKAFPGVKALDKASLNVYPGRVMALMGENGAGKSTLMKVLTGIYSRDAGEIVYQGQSAQFKGPRDSQQAGISIIHQELNLIRELTIAENIFLGREITSAFGRIDWPQMYAEADKLLARLKVKHSSKTLLGQLSLGEQQMVEIAKALSFESKVIIMDEPTDALTDTETEALFSVIRELREQGCGIVYISHRLKEIFEICDDITVLRDGKFIGQCEVVQTDEDGLIEMMVGRKLEEQYPRIDVVHGQTCLEVIGLTGSGVHDVSFTLKRGEILGISGLMGAGRTELMKVIYGALPSERGVINLDNRTINPISPQDGLANGIAYISEDRKGDGLVLGLSVKENMSLCALDKLSKGVQIQHQDEVVAVDDFIQLFNIKTPSREQIIGNLSGGNQQKVAIAKGLMTKPKVLILDEPTRGVDVGAKKEIYQLINKFKAEGMSIILVSSEMPEVLGMSDRILVMHEGRITGEFEAKHADQEKLMACAVGKKVSEEAA</sequence>
<accession>Q8D7T7</accession>
<reference key="1">
    <citation type="submission" date="2002-12" db="EMBL/GenBank/DDBJ databases">
        <title>Complete genome sequence of Vibrio vulnificus CMCP6.</title>
        <authorList>
            <person name="Rhee J.H."/>
            <person name="Kim S.Y."/>
            <person name="Chung S.S."/>
            <person name="Kim J.J."/>
            <person name="Moon Y.H."/>
            <person name="Jeong H."/>
            <person name="Choy H.E."/>
        </authorList>
    </citation>
    <scope>NUCLEOTIDE SEQUENCE [LARGE SCALE GENOMIC DNA]</scope>
    <source>
        <strain>CMCP6</strain>
    </source>
</reference>
<protein>
    <recommendedName>
        <fullName evidence="1">Ribose import ATP-binding protein RbsA</fullName>
        <ecNumber evidence="1">7.5.2.7</ecNumber>
    </recommendedName>
</protein>
<keyword id="KW-0067">ATP-binding</keyword>
<keyword id="KW-0997">Cell inner membrane</keyword>
<keyword id="KW-1003">Cell membrane</keyword>
<keyword id="KW-0472">Membrane</keyword>
<keyword id="KW-0547">Nucleotide-binding</keyword>
<keyword id="KW-0677">Repeat</keyword>
<keyword id="KW-0762">Sugar transport</keyword>
<keyword id="KW-1278">Translocase</keyword>
<keyword id="KW-0813">Transport</keyword>
<gene>
    <name evidence="1" type="primary">rbsA</name>
    <name type="ordered locus">VV2_0062</name>
</gene>
<proteinExistence type="inferred from homology"/>
<name>RBSA_VIBVU</name>
<comment type="function">
    <text evidence="1">Part of the ABC transporter complex RbsABC involved in ribose import. Responsible for energy coupling to the transport system.</text>
</comment>
<comment type="catalytic activity">
    <reaction evidence="1">
        <text>D-ribose(out) + ATP + H2O = D-ribose(in) + ADP + phosphate + H(+)</text>
        <dbReference type="Rhea" id="RHEA:29903"/>
        <dbReference type="ChEBI" id="CHEBI:15377"/>
        <dbReference type="ChEBI" id="CHEBI:15378"/>
        <dbReference type="ChEBI" id="CHEBI:30616"/>
        <dbReference type="ChEBI" id="CHEBI:43474"/>
        <dbReference type="ChEBI" id="CHEBI:47013"/>
        <dbReference type="ChEBI" id="CHEBI:456216"/>
        <dbReference type="EC" id="7.5.2.7"/>
    </reaction>
</comment>
<comment type="subunit">
    <text evidence="1">The complex is composed of an ATP-binding protein (RbsA), two transmembrane proteins (RbsC) and a solute-binding protein (RbsB).</text>
</comment>
<comment type="subcellular location">
    <subcellularLocation>
        <location evidence="1">Cell inner membrane</location>
        <topology evidence="1">Peripheral membrane protein</topology>
    </subcellularLocation>
</comment>
<comment type="similarity">
    <text evidence="1">Belongs to the ABC transporter superfamily. Ribose importer (TC 3.A.1.2.1) family.</text>
</comment>
<dbReference type="EC" id="7.5.2.7" evidence="1"/>
<dbReference type="EMBL" id="AE016796">
    <property type="protein sequence ID" value="AAO07038.1"/>
    <property type="molecule type" value="Genomic_DNA"/>
</dbReference>
<dbReference type="RefSeq" id="WP_011081050.1">
    <property type="nucleotide sequence ID" value="NC_004460.2"/>
</dbReference>
<dbReference type="SMR" id="Q8D7T7"/>
<dbReference type="KEGG" id="vvu:VV2_0062"/>
<dbReference type="HOGENOM" id="CLU_000604_92_3_6"/>
<dbReference type="Proteomes" id="UP000002275">
    <property type="component" value="Chromosome 2"/>
</dbReference>
<dbReference type="GO" id="GO:0005886">
    <property type="term" value="C:plasma membrane"/>
    <property type="evidence" value="ECO:0007669"/>
    <property type="project" value="UniProtKB-SubCell"/>
</dbReference>
<dbReference type="GO" id="GO:0015611">
    <property type="term" value="F:ABC-type D-ribose transporter activity"/>
    <property type="evidence" value="ECO:0007669"/>
    <property type="project" value="UniProtKB-EC"/>
</dbReference>
<dbReference type="GO" id="GO:0005524">
    <property type="term" value="F:ATP binding"/>
    <property type="evidence" value="ECO:0007669"/>
    <property type="project" value="UniProtKB-KW"/>
</dbReference>
<dbReference type="GO" id="GO:0016887">
    <property type="term" value="F:ATP hydrolysis activity"/>
    <property type="evidence" value="ECO:0007669"/>
    <property type="project" value="InterPro"/>
</dbReference>
<dbReference type="CDD" id="cd03216">
    <property type="entry name" value="ABC_Carb_Monos_I"/>
    <property type="match status" value="1"/>
</dbReference>
<dbReference type="CDD" id="cd03215">
    <property type="entry name" value="ABC_Carb_Monos_II"/>
    <property type="match status" value="1"/>
</dbReference>
<dbReference type="FunFam" id="3.40.50.300:FF:000126">
    <property type="entry name" value="Galactose/methyl galactoside import ATP-binding protein MglA"/>
    <property type="match status" value="1"/>
</dbReference>
<dbReference type="FunFam" id="3.40.50.300:FF:000127">
    <property type="entry name" value="Ribose import ATP-binding protein RbsA"/>
    <property type="match status" value="1"/>
</dbReference>
<dbReference type="Gene3D" id="3.40.50.300">
    <property type="entry name" value="P-loop containing nucleotide triphosphate hydrolases"/>
    <property type="match status" value="2"/>
</dbReference>
<dbReference type="InterPro" id="IPR003593">
    <property type="entry name" value="AAA+_ATPase"/>
</dbReference>
<dbReference type="InterPro" id="IPR050107">
    <property type="entry name" value="ABC_carbohydrate_import_ATPase"/>
</dbReference>
<dbReference type="InterPro" id="IPR003439">
    <property type="entry name" value="ABC_transporter-like_ATP-bd"/>
</dbReference>
<dbReference type="InterPro" id="IPR017871">
    <property type="entry name" value="ABC_transporter-like_CS"/>
</dbReference>
<dbReference type="InterPro" id="IPR027417">
    <property type="entry name" value="P-loop_NTPase"/>
</dbReference>
<dbReference type="NCBIfam" id="NF008030">
    <property type="entry name" value="PRK10762.1"/>
    <property type="match status" value="1"/>
</dbReference>
<dbReference type="PANTHER" id="PTHR43790">
    <property type="entry name" value="CARBOHYDRATE TRANSPORT ATP-BINDING PROTEIN MG119-RELATED"/>
    <property type="match status" value="1"/>
</dbReference>
<dbReference type="PANTHER" id="PTHR43790:SF3">
    <property type="entry name" value="D-ALLOSE IMPORT ATP-BINDING PROTEIN ALSA-RELATED"/>
    <property type="match status" value="1"/>
</dbReference>
<dbReference type="Pfam" id="PF00005">
    <property type="entry name" value="ABC_tran"/>
    <property type="match status" value="2"/>
</dbReference>
<dbReference type="SMART" id="SM00382">
    <property type="entry name" value="AAA"/>
    <property type="match status" value="2"/>
</dbReference>
<dbReference type="SUPFAM" id="SSF52540">
    <property type="entry name" value="P-loop containing nucleoside triphosphate hydrolases"/>
    <property type="match status" value="2"/>
</dbReference>
<dbReference type="PROSITE" id="PS00211">
    <property type="entry name" value="ABC_TRANSPORTER_1"/>
    <property type="match status" value="2"/>
</dbReference>
<dbReference type="PROSITE" id="PS50893">
    <property type="entry name" value="ABC_TRANSPORTER_2"/>
    <property type="match status" value="2"/>
</dbReference>
<dbReference type="PROSITE" id="PS51254">
    <property type="entry name" value="RBSA"/>
    <property type="match status" value="1"/>
</dbReference>